<proteinExistence type="inferred from homology"/>
<protein>
    <recommendedName>
        <fullName evidence="1">Bifunctional glutamine synthetase adenylyltransferase/adenylyl-removing enzyme</fullName>
    </recommendedName>
    <alternativeName>
        <fullName evidence="1">ATP:glutamine synthetase adenylyltransferase</fullName>
    </alternativeName>
    <alternativeName>
        <fullName evidence="1">ATase</fullName>
    </alternativeName>
    <domain>
        <recommendedName>
            <fullName evidence="1">Glutamine synthetase adenylyl-L-tyrosine phosphorylase</fullName>
            <ecNumber evidence="1">2.7.7.89</ecNumber>
        </recommendedName>
        <alternativeName>
            <fullName evidence="1">Adenylyl removase</fullName>
            <shortName evidence="1">AR</shortName>
            <shortName evidence="1">AT-N</shortName>
        </alternativeName>
    </domain>
    <domain>
        <recommendedName>
            <fullName evidence="1">Glutamine synthetase adenylyl transferase</fullName>
            <ecNumber evidence="1">2.7.7.42</ecNumber>
        </recommendedName>
        <alternativeName>
            <fullName evidence="1">Adenylyl transferase</fullName>
            <shortName evidence="1">AT</shortName>
            <shortName evidence="1">AT-C</shortName>
        </alternativeName>
    </domain>
</protein>
<keyword id="KW-0067">ATP-binding</keyword>
<keyword id="KW-0460">Magnesium</keyword>
<keyword id="KW-0511">Multifunctional enzyme</keyword>
<keyword id="KW-0547">Nucleotide-binding</keyword>
<keyword id="KW-0548">Nucleotidyltransferase</keyword>
<keyword id="KW-1185">Reference proteome</keyword>
<keyword id="KW-0808">Transferase</keyword>
<sequence length="947" mass="108157">MTPLSSPLRQYWQTVVERLPEGFTETSLSAQAKSVLTFSDFALDSVIAHPEWLAELESASPQADEWRHYAGWLQEALADVCDDASLMRELRLFRRRIMVRIAWAQALSRVEDETILQQLSHLAETLIVGARDWLYAACCREWGTPCNPQGVPQPLLILGMGKLGGGELNFSSDIDLIFAWPEHGTTQGGRRELDNAQFFTRLGQRLIKALDQPTMDGFVYRVDMRLRPFGDSGPLVLSFAALEDYYQEQGRDWERYAMVKARIMGDNNDAWSRELRAMLRPFVFRRYIDFSVIQSLRNMKGMIAREVRRRGLKDNIKLGAGGIREIEFIVQVFQLIRGGREPSLQSRSLLPTLNAITALHLLPENDVTQLRAAYLFLRRLENLLQSINDEQTQTLPADDLNRARLAWGMNTDNWPQLVGKLTEHMANVRRVFNELIGDDEADTPQEEELSEPWREVWQDTLQEGDSTPVLAHLADEDRRQLLTLIADFRKELDKRPIGPRGRQVLDQLMPRLLDDVCSREDAAVTLSRITPLLAGIVTRTTYLELLSEFPGALKHLIMLCAASPMIASQLARYPLLLDELLDPGTLYQPTATNAYRDELRQYLLRVPEEDEEQQLEALRQFKQAQLLRIAAADIAGTLSVMKVSDHLTWLAEAMIDAVVQQAWMQMVARYGQPTHLDERQGRGFAVVGYGKLGGWELGYSSDLDLIFLHDCPIDVMTNGEREIDGRQFYLRLAQRIMHLFSTRTSSGILYEVDARLRPSGAAGMLVTSADAFADYQQHEAWTWEHQALVRARVVYGDPQLTSQFDAVRRTIMTTARDGKTLQTEVREMREKMRSHLGNKHRDRFDIKADEGGITDIEFIAQYLVLRYAHEKPKLTRWSDNVRILELLAQNGIMDEHEAQALTVAYTTLRDELHHLALQELPGHVAQTCFSKERALVQASWRKWLVAV</sequence>
<organism>
    <name type="scientific">Salmonella arizonae (strain ATCC BAA-731 / CDC346-86 / RSK2980)</name>
    <dbReference type="NCBI Taxonomy" id="41514"/>
    <lineage>
        <taxon>Bacteria</taxon>
        <taxon>Pseudomonadati</taxon>
        <taxon>Pseudomonadota</taxon>
        <taxon>Gammaproteobacteria</taxon>
        <taxon>Enterobacterales</taxon>
        <taxon>Enterobacteriaceae</taxon>
        <taxon>Salmonella</taxon>
    </lineage>
</organism>
<dbReference type="EC" id="2.7.7.89" evidence="1"/>
<dbReference type="EC" id="2.7.7.42" evidence="1"/>
<dbReference type="EMBL" id="CP000880">
    <property type="protein sequence ID" value="ABX24205.1"/>
    <property type="molecule type" value="Genomic_DNA"/>
</dbReference>
<dbReference type="SMR" id="A9MPW2"/>
<dbReference type="STRING" id="41514.SARI_04428"/>
<dbReference type="KEGG" id="ses:SARI_04428"/>
<dbReference type="HOGENOM" id="CLU_006233_0_1_6"/>
<dbReference type="Proteomes" id="UP000002084">
    <property type="component" value="Chromosome"/>
</dbReference>
<dbReference type="GO" id="GO:0005829">
    <property type="term" value="C:cytosol"/>
    <property type="evidence" value="ECO:0007669"/>
    <property type="project" value="TreeGrafter"/>
</dbReference>
<dbReference type="GO" id="GO:0008882">
    <property type="term" value="F:[glutamate-ammonia-ligase] adenylyltransferase activity"/>
    <property type="evidence" value="ECO:0007669"/>
    <property type="project" value="UniProtKB-UniRule"/>
</dbReference>
<dbReference type="GO" id="GO:0047388">
    <property type="term" value="F:[glutamine synthetase]-adenylyl-L-tyrosine phosphorylase activity"/>
    <property type="evidence" value="ECO:0007669"/>
    <property type="project" value="UniProtKB-EC"/>
</dbReference>
<dbReference type="GO" id="GO:0005524">
    <property type="term" value="F:ATP binding"/>
    <property type="evidence" value="ECO:0007669"/>
    <property type="project" value="UniProtKB-UniRule"/>
</dbReference>
<dbReference type="GO" id="GO:0000287">
    <property type="term" value="F:magnesium ion binding"/>
    <property type="evidence" value="ECO:0007669"/>
    <property type="project" value="UniProtKB-UniRule"/>
</dbReference>
<dbReference type="GO" id="GO:0000820">
    <property type="term" value="P:regulation of glutamine family amino acid metabolic process"/>
    <property type="evidence" value="ECO:0007669"/>
    <property type="project" value="UniProtKB-UniRule"/>
</dbReference>
<dbReference type="CDD" id="cd05401">
    <property type="entry name" value="NT_GlnE_GlnD_like"/>
    <property type="match status" value="2"/>
</dbReference>
<dbReference type="FunFam" id="1.10.4050.10:FF:000001">
    <property type="entry name" value="Bifunctional glutamine synthetase adenylyltransferase/adenylyl-removing enzyme"/>
    <property type="match status" value="1"/>
</dbReference>
<dbReference type="FunFam" id="1.20.120.1510:FF:000001">
    <property type="entry name" value="Bifunctional glutamine synthetase adenylyltransferase/adenylyl-removing enzyme"/>
    <property type="match status" value="1"/>
</dbReference>
<dbReference type="FunFam" id="1.20.120.330:FF:000005">
    <property type="entry name" value="Bifunctional glutamine synthetase adenylyltransferase/adenylyl-removing enzyme"/>
    <property type="match status" value="1"/>
</dbReference>
<dbReference type="FunFam" id="1.20.120.330:FF:000008">
    <property type="entry name" value="Bifunctional glutamine synthetase adenylyltransferase/adenylyl-removing enzyme"/>
    <property type="match status" value="1"/>
</dbReference>
<dbReference type="FunFam" id="3.30.460.10:FF:000009">
    <property type="entry name" value="Bifunctional glutamine synthetase adenylyltransferase/adenylyl-removing enzyme"/>
    <property type="match status" value="1"/>
</dbReference>
<dbReference type="FunFam" id="3.30.460.10:FF:000014">
    <property type="entry name" value="Bifunctional glutamine synthetase adenylyltransferase/adenylyl-removing enzyme"/>
    <property type="match status" value="1"/>
</dbReference>
<dbReference type="Gene3D" id="1.20.120.1510">
    <property type="match status" value="1"/>
</dbReference>
<dbReference type="Gene3D" id="3.30.460.10">
    <property type="entry name" value="Beta Polymerase, domain 2"/>
    <property type="match status" value="2"/>
</dbReference>
<dbReference type="Gene3D" id="1.10.4050.10">
    <property type="entry name" value="Glutamine synthase adenylyltransferase GlnE"/>
    <property type="match status" value="1"/>
</dbReference>
<dbReference type="Gene3D" id="1.20.120.330">
    <property type="entry name" value="Nucleotidyltransferases domain 2"/>
    <property type="match status" value="2"/>
</dbReference>
<dbReference type="HAMAP" id="MF_00802">
    <property type="entry name" value="GlnE"/>
    <property type="match status" value="1"/>
</dbReference>
<dbReference type="InterPro" id="IPR023057">
    <property type="entry name" value="GlnE"/>
</dbReference>
<dbReference type="InterPro" id="IPR005190">
    <property type="entry name" value="GlnE_rpt_dom"/>
</dbReference>
<dbReference type="InterPro" id="IPR043519">
    <property type="entry name" value="NT_sf"/>
</dbReference>
<dbReference type="InterPro" id="IPR013546">
    <property type="entry name" value="PII_UdlTrfase/GS_AdlTrfase"/>
</dbReference>
<dbReference type="NCBIfam" id="NF008292">
    <property type="entry name" value="PRK11072.1"/>
    <property type="match status" value="1"/>
</dbReference>
<dbReference type="PANTHER" id="PTHR30621:SF0">
    <property type="entry name" value="BIFUNCTIONAL GLUTAMINE SYNTHETASE ADENYLYLTRANSFERASE_ADENYLYL-REMOVING ENZYME"/>
    <property type="match status" value="1"/>
</dbReference>
<dbReference type="PANTHER" id="PTHR30621">
    <property type="entry name" value="GLUTAMINE SYNTHETASE ADENYLYLTRANSFERASE"/>
    <property type="match status" value="1"/>
</dbReference>
<dbReference type="Pfam" id="PF08335">
    <property type="entry name" value="GlnD_UR_UTase"/>
    <property type="match status" value="2"/>
</dbReference>
<dbReference type="Pfam" id="PF03710">
    <property type="entry name" value="GlnE"/>
    <property type="match status" value="2"/>
</dbReference>
<dbReference type="SUPFAM" id="SSF81301">
    <property type="entry name" value="Nucleotidyltransferase"/>
    <property type="match status" value="2"/>
</dbReference>
<dbReference type="SUPFAM" id="SSF81593">
    <property type="entry name" value="Nucleotidyltransferase substrate binding subunit/domain"/>
    <property type="match status" value="2"/>
</dbReference>
<feature type="chain" id="PRO_1000083701" description="Bifunctional glutamine synthetase adenylyltransferase/adenylyl-removing enzyme">
    <location>
        <begin position="1"/>
        <end position="947"/>
    </location>
</feature>
<feature type="region of interest" description="Adenylyl removase" evidence="1">
    <location>
        <begin position="1"/>
        <end position="440"/>
    </location>
</feature>
<feature type="region of interest" description="Adenylyl transferase" evidence="1">
    <location>
        <begin position="450"/>
        <end position="947"/>
    </location>
</feature>
<gene>
    <name evidence="1" type="primary">glnE</name>
    <name type="ordered locus">SARI_04428</name>
</gene>
<reference key="1">
    <citation type="submission" date="2007-11" db="EMBL/GenBank/DDBJ databases">
        <authorList>
            <consortium name="The Salmonella enterica serovar Arizonae Genome Sequencing Project"/>
            <person name="McClelland M."/>
            <person name="Sanderson E.K."/>
            <person name="Porwollik S."/>
            <person name="Spieth J."/>
            <person name="Clifton W.S."/>
            <person name="Fulton R."/>
            <person name="Chunyan W."/>
            <person name="Wollam A."/>
            <person name="Shah N."/>
            <person name="Pepin K."/>
            <person name="Bhonagiri V."/>
            <person name="Nash W."/>
            <person name="Johnson M."/>
            <person name="Thiruvilangam P."/>
            <person name="Wilson R."/>
        </authorList>
    </citation>
    <scope>NUCLEOTIDE SEQUENCE [LARGE SCALE GENOMIC DNA]</scope>
    <source>
        <strain>ATCC BAA-731 / CDC346-86 / RSK2980</strain>
    </source>
</reference>
<name>GLNE_SALAR</name>
<evidence type="ECO:0000255" key="1">
    <source>
        <dbReference type="HAMAP-Rule" id="MF_00802"/>
    </source>
</evidence>
<accession>A9MPW2</accession>
<comment type="function">
    <text evidence="1">Involved in the regulation of glutamine synthetase GlnA, a key enzyme in the process to assimilate ammonia. When cellular nitrogen levels are high, the C-terminal adenylyl transferase (AT) inactivates GlnA by covalent transfer of an adenylyl group from ATP to specific tyrosine residue of GlnA, thus reducing its activity. Conversely, when nitrogen levels are low, the N-terminal adenylyl removase (AR) activates GlnA by removing the adenylyl group by phosphorolysis, increasing its activity. The regulatory region of GlnE binds the signal transduction protein PII (GlnB) which indicates the nitrogen status of the cell.</text>
</comment>
<comment type="catalytic activity">
    <reaction evidence="1">
        <text>[glutamine synthetase]-O(4)-(5'-adenylyl)-L-tyrosine + phosphate = [glutamine synthetase]-L-tyrosine + ADP</text>
        <dbReference type="Rhea" id="RHEA:43716"/>
        <dbReference type="Rhea" id="RHEA-COMP:10660"/>
        <dbReference type="Rhea" id="RHEA-COMP:10661"/>
        <dbReference type="ChEBI" id="CHEBI:43474"/>
        <dbReference type="ChEBI" id="CHEBI:46858"/>
        <dbReference type="ChEBI" id="CHEBI:83624"/>
        <dbReference type="ChEBI" id="CHEBI:456216"/>
        <dbReference type="EC" id="2.7.7.89"/>
    </reaction>
</comment>
<comment type="catalytic activity">
    <reaction evidence="1">
        <text>[glutamine synthetase]-L-tyrosine + ATP = [glutamine synthetase]-O(4)-(5'-adenylyl)-L-tyrosine + diphosphate</text>
        <dbReference type="Rhea" id="RHEA:18589"/>
        <dbReference type="Rhea" id="RHEA-COMP:10660"/>
        <dbReference type="Rhea" id="RHEA-COMP:10661"/>
        <dbReference type="ChEBI" id="CHEBI:30616"/>
        <dbReference type="ChEBI" id="CHEBI:33019"/>
        <dbReference type="ChEBI" id="CHEBI:46858"/>
        <dbReference type="ChEBI" id="CHEBI:83624"/>
        <dbReference type="EC" id="2.7.7.42"/>
    </reaction>
</comment>
<comment type="cofactor">
    <cofactor evidence="1">
        <name>Mg(2+)</name>
        <dbReference type="ChEBI" id="CHEBI:18420"/>
    </cofactor>
</comment>
<comment type="similarity">
    <text evidence="1">Belongs to the GlnE family.</text>
</comment>